<protein>
    <recommendedName>
        <fullName>Prorelaxin</fullName>
    </recommendedName>
    <component>
        <recommendedName>
            <fullName>Relaxin B chain</fullName>
        </recommendedName>
    </component>
    <component>
        <recommendedName>
            <fullName>Relaxin A chain</fullName>
        </recommendedName>
    </component>
</protein>
<organism>
    <name type="scientific">Canis lupus familiaris</name>
    <name type="common">Dog</name>
    <name type="synonym">Canis familiaris</name>
    <dbReference type="NCBI Taxonomy" id="9615"/>
    <lineage>
        <taxon>Eukaryota</taxon>
        <taxon>Metazoa</taxon>
        <taxon>Chordata</taxon>
        <taxon>Craniata</taxon>
        <taxon>Vertebrata</taxon>
        <taxon>Euteleostomi</taxon>
        <taxon>Mammalia</taxon>
        <taxon>Eutheria</taxon>
        <taxon>Laurasiatheria</taxon>
        <taxon>Carnivora</taxon>
        <taxon>Caniformia</taxon>
        <taxon>Canidae</taxon>
        <taxon>Canis</taxon>
    </lineage>
</organism>
<evidence type="ECO:0000269" key="1">
    <source>
    </source>
</evidence>
<evidence type="ECO:0000269" key="2">
    <source>
    </source>
</evidence>
<evidence type="ECO:0000305" key="3"/>
<name>RELX_CANLF</name>
<gene>
    <name type="primary">RLN</name>
</gene>
<dbReference type="EMBL" id="AF233687">
    <property type="protein sequence ID" value="AAF60302.1"/>
    <property type="molecule type" value="mRNA"/>
</dbReference>
<dbReference type="RefSeq" id="NP_001003132.1">
    <property type="nucleotide sequence ID" value="NM_001003132.1"/>
</dbReference>
<dbReference type="SMR" id="Q9TRM8"/>
<dbReference type="FunCoup" id="Q9TRM8">
    <property type="interactions" value="23"/>
</dbReference>
<dbReference type="STRING" id="9615.ENSCAFP00000031075"/>
<dbReference type="PaxDb" id="9612-ENSCAFP00000031075"/>
<dbReference type="GeneID" id="403742"/>
<dbReference type="KEGG" id="cfa:403742"/>
<dbReference type="CTD" id="6019"/>
<dbReference type="eggNOG" id="ENOG502TH8D">
    <property type="taxonomic scope" value="Eukaryota"/>
</dbReference>
<dbReference type="InParanoid" id="Q9TRM8"/>
<dbReference type="OrthoDB" id="8784777at2759"/>
<dbReference type="Proteomes" id="UP000002254">
    <property type="component" value="Unplaced"/>
</dbReference>
<dbReference type="Proteomes" id="UP000694429">
    <property type="component" value="Unplaced"/>
</dbReference>
<dbReference type="Proteomes" id="UP000694542">
    <property type="component" value="Unplaced"/>
</dbReference>
<dbReference type="Proteomes" id="UP000805418">
    <property type="component" value="Unplaced"/>
</dbReference>
<dbReference type="GO" id="GO:0005576">
    <property type="term" value="C:extracellular region"/>
    <property type="evidence" value="ECO:0007669"/>
    <property type="project" value="UniProtKB-SubCell"/>
</dbReference>
<dbReference type="GO" id="GO:0005179">
    <property type="term" value="F:hormone activity"/>
    <property type="evidence" value="ECO:0007669"/>
    <property type="project" value="UniProtKB-KW"/>
</dbReference>
<dbReference type="CDD" id="cd00101">
    <property type="entry name" value="IlGF_like"/>
    <property type="match status" value="1"/>
</dbReference>
<dbReference type="CDD" id="cd04365">
    <property type="entry name" value="IlGF_relaxin_like"/>
    <property type="match status" value="1"/>
</dbReference>
<dbReference type="InterPro" id="IPR016179">
    <property type="entry name" value="Insulin-like"/>
</dbReference>
<dbReference type="InterPro" id="IPR036438">
    <property type="entry name" value="Insulin-like_sf"/>
</dbReference>
<dbReference type="InterPro" id="IPR022353">
    <property type="entry name" value="Insulin_CS"/>
</dbReference>
<dbReference type="InterPro" id="IPR022421">
    <property type="entry name" value="Relaxin"/>
</dbReference>
<dbReference type="InterPro" id="IPR051042">
    <property type="entry name" value="Repro_Hormone_Insulin-like"/>
</dbReference>
<dbReference type="PANTHER" id="PTHR12004:SF13">
    <property type="entry name" value="PRORELAXIN H2"/>
    <property type="match status" value="1"/>
</dbReference>
<dbReference type="PANTHER" id="PTHR12004">
    <property type="entry name" value="RELAXIN"/>
    <property type="match status" value="1"/>
</dbReference>
<dbReference type="Pfam" id="PF00049">
    <property type="entry name" value="Insulin"/>
    <property type="match status" value="1"/>
</dbReference>
<dbReference type="PRINTS" id="PR02004">
    <property type="entry name" value="RELAXIN"/>
</dbReference>
<dbReference type="SMART" id="SM00078">
    <property type="entry name" value="IlGF"/>
    <property type="match status" value="1"/>
</dbReference>
<dbReference type="SUPFAM" id="SSF56994">
    <property type="entry name" value="Insulin-like"/>
    <property type="match status" value="1"/>
</dbReference>
<dbReference type="PROSITE" id="PS00262">
    <property type="entry name" value="INSULIN"/>
    <property type="match status" value="1"/>
</dbReference>
<feature type="signal peptide" evidence="2">
    <location>
        <begin position="1"/>
        <end position="25"/>
    </location>
</feature>
<feature type="peptide" id="PRO_0000016067" description="Relaxin B chain">
    <location>
        <begin position="26"/>
        <end position="60"/>
    </location>
</feature>
<feature type="propeptide" id="PRO_0000016068" description="Connecting peptide">
    <location>
        <begin position="63"/>
        <end position="149"/>
    </location>
</feature>
<feature type="peptide" id="PRO_0000016069" description="Relaxin A chain">
    <location>
        <begin position="154"/>
        <end position="177"/>
    </location>
</feature>
<feature type="disulfide bond" description="Interchain (between B and A chains)">
    <location>
        <begin position="34"/>
        <end position="164"/>
    </location>
</feature>
<feature type="disulfide bond" description="Interchain (between B and A chains)">
    <location>
        <begin position="46"/>
        <end position="177"/>
    </location>
</feature>
<feature type="disulfide bond">
    <location>
        <begin position="163"/>
        <end position="168"/>
    </location>
</feature>
<feature type="sequence conflict" description="In Ref. 2; AA sequence." evidence="3" ref="2">
    <original>I</original>
    <variation>S</variation>
    <location>
        <position position="49"/>
    </location>
</feature>
<comment type="function">
    <text>Relaxin is an ovarian hormone that acts with estrogen to produce dilatation of the birth canal in many mammals.</text>
</comment>
<comment type="subunit">
    <text>Heterodimer of a B chain and an A chain linked by two disulfide bonds.</text>
</comment>
<comment type="subcellular location">
    <subcellularLocation>
        <location>Secreted</location>
    </subcellularLocation>
</comment>
<comment type="tissue specificity">
    <text evidence="1">Placenta; syncytiotrophoblast.</text>
</comment>
<comment type="similarity">
    <text evidence="3">Belongs to the insulin family.</text>
</comment>
<proteinExistence type="evidence at protein level"/>
<sequence>MLRWFLSHLLGVWLLLSQLPREIPATDDKKLKACGRDYVRLQIEVCGSIWWGRKAGQLRERRQISEPLAEVVPSSIINDPEILSLMLQSIPGMPQELRIATRSGKEKLLRELHFVLEDSNLNLEEMKKTFLNTQFEAEDKSLSKLDKHPRKKRDNYIKMSDKCCNVGCTRRELASRC</sequence>
<reference key="1">
    <citation type="journal article" date="1999" name="Biol. Reprod.">
        <title>Canine preprorelaxin: nucleic acid sequence and localization within the canine placenta.</title>
        <authorList>
            <person name="Klonisch T."/>
            <person name="Hombach-Klonisch S."/>
            <person name="Froehlich C."/>
            <person name="Kauffold J."/>
            <person name="Steger K."/>
            <person name="Steinetz B.G."/>
            <person name="Fischer B."/>
        </authorList>
    </citation>
    <scope>NUCLEOTIDE SEQUENCE [MRNA]</scope>
    <scope>TISSUE SPECIFICITY</scope>
    <source>
        <tissue>Placenta</tissue>
    </source>
</reference>
<reference key="2">
    <citation type="journal article" date="1992" name="J. Protein Chem.">
        <title>Purification and sequence determination of canine relaxin.</title>
        <authorList>
            <person name="Stewart D.R."/>
            <person name="Henzel W.J."/>
            <person name="Vandlen R."/>
        </authorList>
    </citation>
    <scope>PROTEIN SEQUENCE OF 26-60 AND 154-177</scope>
    <source>
        <tissue>Placenta</tissue>
    </source>
</reference>
<accession>Q9TRM8</accession>
<accession>Q9N0Z7</accession>
<accession>Q9TRM9</accession>
<keyword id="KW-0165">Cleavage on pair of basic residues</keyword>
<keyword id="KW-0903">Direct protein sequencing</keyword>
<keyword id="KW-1015">Disulfide bond</keyword>
<keyword id="KW-0372">Hormone</keyword>
<keyword id="KW-1185">Reference proteome</keyword>
<keyword id="KW-0964">Secreted</keyword>
<keyword id="KW-0732">Signal</keyword>